<keyword id="KW-0963">Cytoplasm</keyword>
<keyword id="KW-0342">GTP-binding</keyword>
<keyword id="KW-0436">Ligase</keyword>
<keyword id="KW-0460">Magnesium</keyword>
<keyword id="KW-0479">Metal-binding</keyword>
<keyword id="KW-0547">Nucleotide-binding</keyword>
<keyword id="KW-0658">Purine biosynthesis</keyword>
<dbReference type="EC" id="6.3.4.4" evidence="1"/>
<dbReference type="EMBL" id="BX897699">
    <property type="protein sequence ID" value="CAF27189.1"/>
    <property type="molecule type" value="Genomic_DNA"/>
</dbReference>
<dbReference type="RefSeq" id="WP_011180316.1">
    <property type="nucleotide sequence ID" value="NZ_LRIJ02000001.1"/>
</dbReference>
<dbReference type="SMR" id="Q6G4G5"/>
<dbReference type="PaxDb" id="283166-BH03790"/>
<dbReference type="EnsemblBacteria" id="CAF27189">
    <property type="protein sequence ID" value="CAF27189"/>
    <property type="gene ID" value="BH03790"/>
</dbReference>
<dbReference type="KEGG" id="bhe:BH03790"/>
<dbReference type="eggNOG" id="COG0104">
    <property type="taxonomic scope" value="Bacteria"/>
</dbReference>
<dbReference type="OrthoDB" id="9807553at2"/>
<dbReference type="UniPathway" id="UPA00075">
    <property type="reaction ID" value="UER00335"/>
</dbReference>
<dbReference type="Proteomes" id="UP000000421">
    <property type="component" value="Chromosome"/>
</dbReference>
<dbReference type="GO" id="GO:0005737">
    <property type="term" value="C:cytoplasm"/>
    <property type="evidence" value="ECO:0007669"/>
    <property type="project" value="UniProtKB-SubCell"/>
</dbReference>
<dbReference type="GO" id="GO:0004019">
    <property type="term" value="F:adenylosuccinate synthase activity"/>
    <property type="evidence" value="ECO:0007669"/>
    <property type="project" value="UniProtKB-UniRule"/>
</dbReference>
<dbReference type="GO" id="GO:0005525">
    <property type="term" value="F:GTP binding"/>
    <property type="evidence" value="ECO:0007669"/>
    <property type="project" value="UniProtKB-UniRule"/>
</dbReference>
<dbReference type="GO" id="GO:0000287">
    <property type="term" value="F:magnesium ion binding"/>
    <property type="evidence" value="ECO:0007669"/>
    <property type="project" value="UniProtKB-UniRule"/>
</dbReference>
<dbReference type="GO" id="GO:0044208">
    <property type="term" value="P:'de novo' AMP biosynthetic process"/>
    <property type="evidence" value="ECO:0007669"/>
    <property type="project" value="UniProtKB-UniRule"/>
</dbReference>
<dbReference type="GO" id="GO:0046040">
    <property type="term" value="P:IMP metabolic process"/>
    <property type="evidence" value="ECO:0007669"/>
    <property type="project" value="TreeGrafter"/>
</dbReference>
<dbReference type="CDD" id="cd03108">
    <property type="entry name" value="AdSS"/>
    <property type="match status" value="1"/>
</dbReference>
<dbReference type="FunFam" id="1.10.300.10:FF:000001">
    <property type="entry name" value="Adenylosuccinate synthetase"/>
    <property type="match status" value="1"/>
</dbReference>
<dbReference type="FunFam" id="3.90.170.10:FF:000001">
    <property type="entry name" value="Adenylosuccinate synthetase"/>
    <property type="match status" value="1"/>
</dbReference>
<dbReference type="Gene3D" id="3.40.440.10">
    <property type="entry name" value="Adenylosuccinate Synthetase, subunit A, domain 1"/>
    <property type="match status" value="1"/>
</dbReference>
<dbReference type="Gene3D" id="1.10.300.10">
    <property type="entry name" value="Adenylosuccinate Synthetase, subunit A, domain 2"/>
    <property type="match status" value="1"/>
</dbReference>
<dbReference type="Gene3D" id="3.90.170.10">
    <property type="entry name" value="Adenylosuccinate Synthetase, subunit A, domain 3"/>
    <property type="match status" value="1"/>
</dbReference>
<dbReference type="HAMAP" id="MF_00011">
    <property type="entry name" value="Adenylosucc_synth"/>
    <property type="match status" value="1"/>
</dbReference>
<dbReference type="InterPro" id="IPR018220">
    <property type="entry name" value="Adenylosuccin_syn_GTP-bd"/>
</dbReference>
<dbReference type="InterPro" id="IPR033128">
    <property type="entry name" value="Adenylosuccin_syn_Lys_AS"/>
</dbReference>
<dbReference type="InterPro" id="IPR042109">
    <property type="entry name" value="Adenylosuccinate_synth_dom1"/>
</dbReference>
<dbReference type="InterPro" id="IPR042110">
    <property type="entry name" value="Adenylosuccinate_synth_dom2"/>
</dbReference>
<dbReference type="InterPro" id="IPR042111">
    <property type="entry name" value="Adenylosuccinate_synth_dom3"/>
</dbReference>
<dbReference type="InterPro" id="IPR001114">
    <property type="entry name" value="Adenylosuccinate_synthetase"/>
</dbReference>
<dbReference type="InterPro" id="IPR027417">
    <property type="entry name" value="P-loop_NTPase"/>
</dbReference>
<dbReference type="NCBIfam" id="NF002223">
    <property type="entry name" value="PRK01117.1"/>
    <property type="match status" value="1"/>
</dbReference>
<dbReference type="NCBIfam" id="TIGR00184">
    <property type="entry name" value="purA"/>
    <property type="match status" value="1"/>
</dbReference>
<dbReference type="PANTHER" id="PTHR11846">
    <property type="entry name" value="ADENYLOSUCCINATE SYNTHETASE"/>
    <property type="match status" value="1"/>
</dbReference>
<dbReference type="PANTHER" id="PTHR11846:SF0">
    <property type="entry name" value="ADENYLOSUCCINATE SYNTHETASE"/>
    <property type="match status" value="1"/>
</dbReference>
<dbReference type="Pfam" id="PF00709">
    <property type="entry name" value="Adenylsucc_synt"/>
    <property type="match status" value="1"/>
</dbReference>
<dbReference type="SMART" id="SM00788">
    <property type="entry name" value="Adenylsucc_synt"/>
    <property type="match status" value="1"/>
</dbReference>
<dbReference type="SUPFAM" id="SSF52540">
    <property type="entry name" value="P-loop containing nucleoside triphosphate hydrolases"/>
    <property type="match status" value="1"/>
</dbReference>
<dbReference type="PROSITE" id="PS01266">
    <property type="entry name" value="ADENYLOSUCCIN_SYN_1"/>
    <property type="match status" value="1"/>
</dbReference>
<dbReference type="PROSITE" id="PS00513">
    <property type="entry name" value="ADENYLOSUCCIN_SYN_2"/>
    <property type="match status" value="1"/>
</dbReference>
<feature type="chain" id="PRO_0000224257" description="Adenylosuccinate synthetase">
    <location>
        <begin position="1"/>
        <end position="429"/>
    </location>
</feature>
<feature type="active site" description="Proton acceptor" evidence="1">
    <location>
        <position position="13"/>
    </location>
</feature>
<feature type="active site" description="Proton donor" evidence="1">
    <location>
        <position position="41"/>
    </location>
</feature>
<feature type="binding site" evidence="1">
    <location>
        <begin position="12"/>
        <end position="18"/>
    </location>
    <ligand>
        <name>GTP</name>
        <dbReference type="ChEBI" id="CHEBI:37565"/>
    </ligand>
</feature>
<feature type="binding site" description="in other chain" evidence="1">
    <location>
        <begin position="13"/>
        <end position="16"/>
    </location>
    <ligand>
        <name>IMP</name>
        <dbReference type="ChEBI" id="CHEBI:58053"/>
        <note>ligand shared between dimeric partners</note>
    </ligand>
</feature>
<feature type="binding site" evidence="1">
    <location>
        <position position="13"/>
    </location>
    <ligand>
        <name>Mg(2+)</name>
        <dbReference type="ChEBI" id="CHEBI:18420"/>
    </ligand>
</feature>
<feature type="binding site" description="in other chain" evidence="1">
    <location>
        <begin position="38"/>
        <end position="41"/>
    </location>
    <ligand>
        <name>IMP</name>
        <dbReference type="ChEBI" id="CHEBI:58053"/>
        <note>ligand shared between dimeric partners</note>
    </ligand>
</feature>
<feature type="binding site" evidence="1">
    <location>
        <begin position="40"/>
        <end position="42"/>
    </location>
    <ligand>
        <name>GTP</name>
        <dbReference type="ChEBI" id="CHEBI:37565"/>
    </ligand>
</feature>
<feature type="binding site" evidence="1">
    <location>
        <position position="40"/>
    </location>
    <ligand>
        <name>Mg(2+)</name>
        <dbReference type="ChEBI" id="CHEBI:18420"/>
    </ligand>
</feature>
<feature type="binding site" description="in other chain" evidence="1">
    <location>
        <position position="129"/>
    </location>
    <ligand>
        <name>IMP</name>
        <dbReference type="ChEBI" id="CHEBI:58053"/>
        <note>ligand shared between dimeric partners</note>
    </ligand>
</feature>
<feature type="binding site" evidence="1">
    <location>
        <position position="143"/>
    </location>
    <ligand>
        <name>IMP</name>
        <dbReference type="ChEBI" id="CHEBI:58053"/>
        <note>ligand shared between dimeric partners</note>
    </ligand>
</feature>
<feature type="binding site" description="in other chain" evidence="1">
    <location>
        <position position="223"/>
    </location>
    <ligand>
        <name>IMP</name>
        <dbReference type="ChEBI" id="CHEBI:58053"/>
        <note>ligand shared between dimeric partners</note>
    </ligand>
</feature>
<feature type="binding site" description="in other chain" evidence="1">
    <location>
        <position position="238"/>
    </location>
    <ligand>
        <name>IMP</name>
        <dbReference type="ChEBI" id="CHEBI:58053"/>
        <note>ligand shared between dimeric partners</note>
    </ligand>
</feature>
<feature type="binding site" evidence="1">
    <location>
        <begin position="298"/>
        <end position="304"/>
    </location>
    <ligand>
        <name>substrate</name>
    </ligand>
</feature>
<feature type="binding site" description="in other chain" evidence="1">
    <location>
        <position position="302"/>
    </location>
    <ligand>
        <name>IMP</name>
        <dbReference type="ChEBI" id="CHEBI:58053"/>
        <note>ligand shared between dimeric partners</note>
    </ligand>
</feature>
<feature type="binding site" evidence="1">
    <location>
        <position position="304"/>
    </location>
    <ligand>
        <name>GTP</name>
        <dbReference type="ChEBI" id="CHEBI:37565"/>
    </ligand>
</feature>
<feature type="binding site" evidence="1">
    <location>
        <begin position="330"/>
        <end position="332"/>
    </location>
    <ligand>
        <name>GTP</name>
        <dbReference type="ChEBI" id="CHEBI:37565"/>
    </ligand>
</feature>
<feature type="binding site" evidence="1">
    <location>
        <begin position="412"/>
        <end position="414"/>
    </location>
    <ligand>
        <name>GTP</name>
        <dbReference type="ChEBI" id="CHEBI:37565"/>
    </ligand>
</feature>
<reference key="1">
    <citation type="journal article" date="2004" name="Proc. Natl. Acad. Sci. U.S.A.">
        <title>The louse-borne human pathogen Bartonella quintana is a genomic derivative of the zoonotic agent Bartonella henselae.</title>
        <authorList>
            <person name="Alsmark U.C.M."/>
            <person name="Frank A.C."/>
            <person name="Karlberg E.O."/>
            <person name="Legault B.-A."/>
            <person name="Ardell D.H."/>
            <person name="Canbaeck B."/>
            <person name="Eriksson A.-S."/>
            <person name="Naeslund A.K."/>
            <person name="Handley S.A."/>
            <person name="Huvet M."/>
            <person name="La Scola B."/>
            <person name="Holmberg M."/>
            <person name="Andersson S.G.E."/>
        </authorList>
    </citation>
    <scope>NUCLEOTIDE SEQUENCE [LARGE SCALE GENOMIC DNA]</scope>
    <source>
        <strain>ATCC 49882 / DSM 28221 / CCUG 30454 / Houston 1</strain>
    </source>
</reference>
<proteinExistence type="inferred from homology"/>
<organism>
    <name type="scientific">Bartonella henselae (strain ATCC 49882 / DSM 28221 / CCUG 30454 / Houston 1)</name>
    <name type="common">Rochalimaea henselae</name>
    <dbReference type="NCBI Taxonomy" id="283166"/>
    <lineage>
        <taxon>Bacteria</taxon>
        <taxon>Pseudomonadati</taxon>
        <taxon>Pseudomonadota</taxon>
        <taxon>Alphaproteobacteria</taxon>
        <taxon>Hyphomicrobiales</taxon>
        <taxon>Bartonellaceae</taxon>
        <taxon>Bartonella</taxon>
    </lineage>
</organism>
<sequence length="429" mass="47190">MANVVVVGTQWGDEGKGKIVDWLSERADIIVRYQGGHNAGHTLVVNGVNYKLSLLPSGLVRGKLSIIGNGVVVDPHHFVVELKKLRDQGVKIVPEILRIAENAPLILSLHRDLDAIRESGFSGLKIGTTKRGIGPAYEDKVGRRAIRVMDLAEANTLMAKIKRLLRHHNALRRGMGVAEIDSQALYDELMQVADEILPFMDCTWRLLDESYRMGKHVLFEGAQGALLDNDFGTYPYVTSSNTVAGQACTGSGMGPGAIHYVLGIAKAYTTRVGEGPFPTEQINDIGEFLGIRGHEFGVVTGRKRRCGWFDAVLVRQMVTICGVQGIALTKLDVLDGLDEIKVCVGYELDGKRIDYLPSSMGAQSRVKPIYETLEGWKQATAHALKWEDLPVQAIKYIRYIEELIGTQVALLSTSPEREDTILITDPFAN</sequence>
<gene>
    <name evidence="1" type="primary">purA</name>
    <name type="ordered locus">BH03790</name>
</gene>
<protein>
    <recommendedName>
        <fullName evidence="1">Adenylosuccinate synthetase</fullName>
        <shortName evidence="1">AMPSase</shortName>
        <shortName evidence="1">AdSS</shortName>
        <ecNumber evidence="1">6.3.4.4</ecNumber>
    </recommendedName>
    <alternativeName>
        <fullName evidence="1">IMP--aspartate ligase</fullName>
    </alternativeName>
</protein>
<accession>Q6G4G5</accession>
<name>PURA_BARHE</name>
<comment type="function">
    <text evidence="1">Plays an important role in the de novo pathway of purine nucleotide biosynthesis. Catalyzes the first committed step in the biosynthesis of AMP from IMP.</text>
</comment>
<comment type="catalytic activity">
    <reaction evidence="1">
        <text>IMP + L-aspartate + GTP = N(6)-(1,2-dicarboxyethyl)-AMP + GDP + phosphate + 2 H(+)</text>
        <dbReference type="Rhea" id="RHEA:15753"/>
        <dbReference type="ChEBI" id="CHEBI:15378"/>
        <dbReference type="ChEBI" id="CHEBI:29991"/>
        <dbReference type="ChEBI" id="CHEBI:37565"/>
        <dbReference type="ChEBI" id="CHEBI:43474"/>
        <dbReference type="ChEBI" id="CHEBI:57567"/>
        <dbReference type="ChEBI" id="CHEBI:58053"/>
        <dbReference type="ChEBI" id="CHEBI:58189"/>
        <dbReference type="EC" id="6.3.4.4"/>
    </reaction>
</comment>
<comment type="cofactor">
    <cofactor evidence="1">
        <name>Mg(2+)</name>
        <dbReference type="ChEBI" id="CHEBI:18420"/>
    </cofactor>
    <text evidence="1">Binds 1 Mg(2+) ion per subunit.</text>
</comment>
<comment type="pathway">
    <text evidence="1">Purine metabolism; AMP biosynthesis via de novo pathway; AMP from IMP: step 1/2.</text>
</comment>
<comment type="subunit">
    <text evidence="1">Homodimer.</text>
</comment>
<comment type="subcellular location">
    <subcellularLocation>
        <location evidence="1">Cytoplasm</location>
    </subcellularLocation>
</comment>
<comment type="similarity">
    <text evidence="1">Belongs to the adenylosuccinate synthetase family.</text>
</comment>
<evidence type="ECO:0000255" key="1">
    <source>
        <dbReference type="HAMAP-Rule" id="MF_00011"/>
    </source>
</evidence>